<evidence type="ECO:0000256" key="1">
    <source>
        <dbReference type="SAM" id="MobiDB-lite"/>
    </source>
</evidence>
<evidence type="ECO:0000269" key="2">
    <source>
    </source>
</evidence>
<gene>
    <name type="ORF">SPBC16C6.03c</name>
</gene>
<protein>
    <recommendedName>
        <fullName>Uncharacterized protein C16C6.03c</fullName>
    </recommendedName>
</protein>
<name>YBD3_SCHPO</name>
<organism>
    <name type="scientific">Schizosaccharomyces pombe (strain 972 / ATCC 24843)</name>
    <name type="common">Fission yeast</name>
    <dbReference type="NCBI Taxonomy" id="284812"/>
    <lineage>
        <taxon>Eukaryota</taxon>
        <taxon>Fungi</taxon>
        <taxon>Dikarya</taxon>
        <taxon>Ascomycota</taxon>
        <taxon>Taphrinomycotina</taxon>
        <taxon>Schizosaccharomycetes</taxon>
        <taxon>Schizosaccharomycetales</taxon>
        <taxon>Schizosaccharomycetaceae</taxon>
        <taxon>Schizosaccharomyces</taxon>
    </lineage>
</organism>
<feature type="chain" id="PRO_0000303927" description="Uncharacterized protein C16C6.03c">
    <location>
        <begin position="1"/>
        <end position="207"/>
    </location>
</feature>
<feature type="region of interest" description="Disordered" evidence="1">
    <location>
        <begin position="1"/>
        <end position="81"/>
    </location>
</feature>
<feature type="region of interest" description="Disordered" evidence="1">
    <location>
        <begin position="140"/>
        <end position="169"/>
    </location>
</feature>
<feature type="compositionally biased region" description="Polar residues" evidence="1">
    <location>
        <begin position="21"/>
        <end position="40"/>
    </location>
</feature>
<feature type="compositionally biased region" description="Basic residues" evidence="1">
    <location>
        <begin position="58"/>
        <end position="70"/>
    </location>
</feature>
<feature type="compositionally biased region" description="Polar residues" evidence="1">
    <location>
        <begin position="140"/>
        <end position="152"/>
    </location>
</feature>
<feature type="compositionally biased region" description="Basic and acidic residues" evidence="1">
    <location>
        <begin position="156"/>
        <end position="165"/>
    </location>
</feature>
<comment type="subcellular location">
    <subcellularLocation>
        <location evidence="2">Nucleus</location>
        <location evidence="2">Nucleolus</location>
    </subcellularLocation>
</comment>
<keyword id="KW-0539">Nucleus</keyword>
<keyword id="KW-1185">Reference proteome</keyword>
<sequence>MNPTSFIYDKPPPPPIINKPFEQTNSSASLTQKNSSSETENVGRHGKRRMDQDLSFKPTKRGSGRGRGRSFRGGSHAGNTRGACAVDGIEYLKRRNISINTPEEIEAWIQERKKNWPTESNIRSKQEKEKVMENLGAADTSQSIDAQPTPSQHPLAHHEPHEKRGPPKKKSLYTKLLNTQLEQENIFFLQFMKLYLKKMGMVVKPVS</sequence>
<dbReference type="EMBL" id="CU329671">
    <property type="protein sequence ID" value="CAA16911.4"/>
    <property type="molecule type" value="Genomic_DNA"/>
</dbReference>
<dbReference type="PIR" id="T39554">
    <property type="entry name" value="T39554"/>
</dbReference>
<dbReference type="SMR" id="O42927"/>
<dbReference type="BioGRID" id="276436">
    <property type="interactions" value="32"/>
</dbReference>
<dbReference type="STRING" id="284812.O42927"/>
<dbReference type="iPTMnet" id="O42927"/>
<dbReference type="PaxDb" id="4896-SPBC16C6.03c.1"/>
<dbReference type="EnsemblFungi" id="SPBC16C6.03c.1">
    <property type="protein sequence ID" value="SPBC16C6.03c.1:pep"/>
    <property type="gene ID" value="SPBC16C6.03c"/>
</dbReference>
<dbReference type="KEGG" id="spo:2539890"/>
<dbReference type="PomBase" id="SPBC16C6.03c"/>
<dbReference type="VEuPathDB" id="FungiDB:SPBC16C6.03c"/>
<dbReference type="HOGENOM" id="CLU_1397079_0_0_1"/>
<dbReference type="InParanoid" id="O42927"/>
<dbReference type="OMA" id="FIYDKPP"/>
<dbReference type="PRO" id="PR:O42927"/>
<dbReference type="Proteomes" id="UP000002485">
    <property type="component" value="Chromosome II"/>
</dbReference>
<dbReference type="GO" id="GO:0005730">
    <property type="term" value="C:nucleolus"/>
    <property type="evidence" value="ECO:0007005"/>
    <property type="project" value="PomBase"/>
</dbReference>
<dbReference type="GO" id="GO:0005634">
    <property type="term" value="C:nucleus"/>
    <property type="evidence" value="ECO:0007005"/>
    <property type="project" value="PomBase"/>
</dbReference>
<dbReference type="GO" id="GO:0000492">
    <property type="term" value="P:box C/D snoRNP assembly"/>
    <property type="evidence" value="ECO:0000266"/>
    <property type="project" value="PomBase"/>
</dbReference>
<dbReference type="GO" id="GO:0180023">
    <property type="term" value="P:cytosolic large ribosomal subunit assembly"/>
    <property type="evidence" value="ECO:0000266"/>
    <property type="project" value="PomBase"/>
</dbReference>
<dbReference type="InterPro" id="IPR019496">
    <property type="entry name" value="NUFIP1_cons_dom"/>
</dbReference>
<dbReference type="Pfam" id="PF10453">
    <property type="entry name" value="NUFIP1"/>
    <property type="match status" value="1"/>
</dbReference>
<accession>O42927</accession>
<reference key="1">
    <citation type="journal article" date="2002" name="Nature">
        <title>The genome sequence of Schizosaccharomyces pombe.</title>
        <authorList>
            <person name="Wood V."/>
            <person name="Gwilliam R."/>
            <person name="Rajandream M.A."/>
            <person name="Lyne M.H."/>
            <person name="Lyne R."/>
            <person name="Stewart A."/>
            <person name="Sgouros J.G."/>
            <person name="Peat N."/>
            <person name="Hayles J."/>
            <person name="Baker S.G."/>
            <person name="Basham D."/>
            <person name="Bowman S."/>
            <person name="Brooks K."/>
            <person name="Brown D."/>
            <person name="Brown S."/>
            <person name="Chillingworth T."/>
            <person name="Churcher C.M."/>
            <person name="Collins M."/>
            <person name="Connor R."/>
            <person name="Cronin A."/>
            <person name="Davis P."/>
            <person name="Feltwell T."/>
            <person name="Fraser A."/>
            <person name="Gentles S."/>
            <person name="Goble A."/>
            <person name="Hamlin N."/>
            <person name="Harris D.E."/>
            <person name="Hidalgo J."/>
            <person name="Hodgson G."/>
            <person name="Holroyd S."/>
            <person name="Hornsby T."/>
            <person name="Howarth S."/>
            <person name="Huckle E.J."/>
            <person name="Hunt S."/>
            <person name="Jagels K."/>
            <person name="James K.D."/>
            <person name="Jones L."/>
            <person name="Jones M."/>
            <person name="Leather S."/>
            <person name="McDonald S."/>
            <person name="McLean J."/>
            <person name="Mooney P."/>
            <person name="Moule S."/>
            <person name="Mungall K.L."/>
            <person name="Murphy L.D."/>
            <person name="Niblett D."/>
            <person name="Odell C."/>
            <person name="Oliver K."/>
            <person name="O'Neil S."/>
            <person name="Pearson D."/>
            <person name="Quail M.A."/>
            <person name="Rabbinowitsch E."/>
            <person name="Rutherford K.M."/>
            <person name="Rutter S."/>
            <person name="Saunders D."/>
            <person name="Seeger K."/>
            <person name="Sharp S."/>
            <person name="Skelton J."/>
            <person name="Simmonds M.N."/>
            <person name="Squares R."/>
            <person name="Squares S."/>
            <person name="Stevens K."/>
            <person name="Taylor K."/>
            <person name="Taylor R.G."/>
            <person name="Tivey A."/>
            <person name="Walsh S.V."/>
            <person name="Warren T."/>
            <person name="Whitehead S."/>
            <person name="Woodward J.R."/>
            <person name="Volckaert G."/>
            <person name="Aert R."/>
            <person name="Robben J."/>
            <person name="Grymonprez B."/>
            <person name="Weltjens I."/>
            <person name="Vanstreels E."/>
            <person name="Rieger M."/>
            <person name="Schaefer M."/>
            <person name="Mueller-Auer S."/>
            <person name="Gabel C."/>
            <person name="Fuchs M."/>
            <person name="Duesterhoeft A."/>
            <person name="Fritzc C."/>
            <person name="Holzer E."/>
            <person name="Moestl D."/>
            <person name="Hilbert H."/>
            <person name="Borzym K."/>
            <person name="Langer I."/>
            <person name="Beck A."/>
            <person name="Lehrach H."/>
            <person name="Reinhardt R."/>
            <person name="Pohl T.M."/>
            <person name="Eger P."/>
            <person name="Zimmermann W."/>
            <person name="Wedler H."/>
            <person name="Wambutt R."/>
            <person name="Purnelle B."/>
            <person name="Goffeau A."/>
            <person name="Cadieu E."/>
            <person name="Dreano S."/>
            <person name="Gloux S."/>
            <person name="Lelaure V."/>
            <person name="Mottier S."/>
            <person name="Galibert F."/>
            <person name="Aves S.J."/>
            <person name="Xiang Z."/>
            <person name="Hunt C."/>
            <person name="Moore K."/>
            <person name="Hurst S.M."/>
            <person name="Lucas M."/>
            <person name="Rochet M."/>
            <person name="Gaillardin C."/>
            <person name="Tallada V.A."/>
            <person name="Garzon A."/>
            <person name="Thode G."/>
            <person name="Daga R.R."/>
            <person name="Cruzado L."/>
            <person name="Jimenez J."/>
            <person name="Sanchez M."/>
            <person name="del Rey F."/>
            <person name="Benito J."/>
            <person name="Dominguez A."/>
            <person name="Revuelta J.L."/>
            <person name="Moreno S."/>
            <person name="Armstrong J."/>
            <person name="Forsburg S.L."/>
            <person name="Cerutti L."/>
            <person name="Lowe T."/>
            <person name="McCombie W.R."/>
            <person name="Paulsen I."/>
            <person name="Potashkin J."/>
            <person name="Shpakovski G.V."/>
            <person name="Ussery D."/>
            <person name="Barrell B.G."/>
            <person name="Nurse P."/>
        </authorList>
    </citation>
    <scope>NUCLEOTIDE SEQUENCE [LARGE SCALE GENOMIC DNA]</scope>
    <source>
        <strain>972 / ATCC 24843</strain>
    </source>
</reference>
<reference key="2">
    <citation type="journal article" date="2011" name="Science">
        <title>Comparative functional genomics of the fission yeasts.</title>
        <authorList>
            <person name="Rhind N."/>
            <person name="Chen Z."/>
            <person name="Yassour M."/>
            <person name="Thompson D.A."/>
            <person name="Haas B.J."/>
            <person name="Habib N."/>
            <person name="Wapinski I."/>
            <person name="Roy S."/>
            <person name="Lin M.F."/>
            <person name="Heiman D.I."/>
            <person name="Young S.K."/>
            <person name="Furuya K."/>
            <person name="Guo Y."/>
            <person name="Pidoux A."/>
            <person name="Chen H.M."/>
            <person name="Robbertse B."/>
            <person name="Goldberg J.M."/>
            <person name="Aoki K."/>
            <person name="Bayne E.H."/>
            <person name="Berlin A.M."/>
            <person name="Desjardins C.A."/>
            <person name="Dobbs E."/>
            <person name="Dukaj L."/>
            <person name="Fan L."/>
            <person name="FitzGerald M.G."/>
            <person name="French C."/>
            <person name="Gujja S."/>
            <person name="Hansen K."/>
            <person name="Keifenheim D."/>
            <person name="Levin J.Z."/>
            <person name="Mosher R.A."/>
            <person name="Mueller C.A."/>
            <person name="Pfiffner J."/>
            <person name="Priest M."/>
            <person name="Russ C."/>
            <person name="Smialowska A."/>
            <person name="Swoboda P."/>
            <person name="Sykes S.M."/>
            <person name="Vaughn M."/>
            <person name="Vengrova S."/>
            <person name="Yoder R."/>
            <person name="Zeng Q."/>
            <person name="Allshire R."/>
            <person name="Baulcombe D."/>
            <person name="Birren B.W."/>
            <person name="Brown W."/>
            <person name="Ekwall K."/>
            <person name="Kellis M."/>
            <person name="Leatherwood J."/>
            <person name="Levin H."/>
            <person name="Margalit H."/>
            <person name="Martienssen R."/>
            <person name="Nieduszynski C.A."/>
            <person name="Spatafora J.W."/>
            <person name="Friedman N."/>
            <person name="Dalgaard J.Z."/>
            <person name="Baumann P."/>
            <person name="Niki H."/>
            <person name="Regev A."/>
            <person name="Nusbaum C."/>
        </authorList>
    </citation>
    <scope>REVISION OF GENE MODEL</scope>
</reference>
<reference key="3">
    <citation type="journal article" date="2006" name="Nat. Biotechnol.">
        <title>ORFeome cloning and global analysis of protein localization in the fission yeast Schizosaccharomyces pombe.</title>
        <authorList>
            <person name="Matsuyama A."/>
            <person name="Arai R."/>
            <person name="Yashiroda Y."/>
            <person name="Shirai A."/>
            <person name="Kamata A."/>
            <person name="Sekido S."/>
            <person name="Kobayashi Y."/>
            <person name="Hashimoto A."/>
            <person name="Hamamoto M."/>
            <person name="Hiraoka Y."/>
            <person name="Horinouchi S."/>
            <person name="Yoshida M."/>
        </authorList>
    </citation>
    <scope>SUBCELLULAR LOCATION [LARGE SCALE ANALYSIS]</scope>
</reference>
<proteinExistence type="predicted"/>